<dbReference type="EMBL" id="M94677">
    <property type="protein sequence ID" value="AAB01587.1"/>
    <property type="molecule type" value="Genomic_DNA"/>
</dbReference>
<dbReference type="PIR" id="PN0618">
    <property type="entry name" value="PN0618"/>
</dbReference>
<dbReference type="SMR" id="P34829"/>
<dbReference type="GO" id="GO:0022625">
    <property type="term" value="C:cytosolic large ribosomal subunit"/>
    <property type="evidence" value="ECO:0007669"/>
    <property type="project" value="TreeGrafter"/>
</dbReference>
<dbReference type="GO" id="GO:0005739">
    <property type="term" value="C:mitochondrion"/>
    <property type="evidence" value="ECO:0007669"/>
    <property type="project" value="UniProtKB-SubCell"/>
</dbReference>
<dbReference type="GO" id="GO:0070180">
    <property type="term" value="F:large ribosomal subunit rRNA binding"/>
    <property type="evidence" value="ECO:0007669"/>
    <property type="project" value="TreeGrafter"/>
</dbReference>
<dbReference type="GO" id="GO:0003735">
    <property type="term" value="F:structural constituent of ribosome"/>
    <property type="evidence" value="ECO:0007669"/>
    <property type="project" value="InterPro"/>
</dbReference>
<dbReference type="GO" id="GO:0006412">
    <property type="term" value="P:translation"/>
    <property type="evidence" value="ECO:0007669"/>
    <property type="project" value="InterPro"/>
</dbReference>
<dbReference type="CDD" id="cd00337">
    <property type="entry name" value="Ribosomal_uL14"/>
    <property type="match status" value="1"/>
</dbReference>
<dbReference type="Gene3D" id="2.40.150.20">
    <property type="entry name" value="Ribosomal protein L14"/>
    <property type="match status" value="1"/>
</dbReference>
<dbReference type="HAMAP" id="MF_01367">
    <property type="entry name" value="Ribosomal_uL14"/>
    <property type="match status" value="1"/>
</dbReference>
<dbReference type="InterPro" id="IPR000218">
    <property type="entry name" value="Ribosomal_uL14"/>
</dbReference>
<dbReference type="InterPro" id="IPR036853">
    <property type="entry name" value="Ribosomal_uL14_sf"/>
</dbReference>
<dbReference type="PANTHER" id="PTHR11761">
    <property type="entry name" value="50S/60S RIBOSOMAL PROTEIN L14/L23"/>
    <property type="match status" value="1"/>
</dbReference>
<dbReference type="PANTHER" id="PTHR11761:SF3">
    <property type="entry name" value="LARGE RIBOSOMAL SUBUNIT PROTEIN UL14M"/>
    <property type="match status" value="1"/>
</dbReference>
<dbReference type="Pfam" id="PF00238">
    <property type="entry name" value="Ribosomal_L14"/>
    <property type="match status" value="1"/>
</dbReference>
<dbReference type="SMART" id="SM01374">
    <property type="entry name" value="Ribosomal_L14"/>
    <property type="match status" value="1"/>
</dbReference>
<dbReference type="SUPFAM" id="SSF50193">
    <property type="entry name" value="Ribosomal protein L14"/>
    <property type="match status" value="1"/>
</dbReference>
<feature type="chain" id="PRO_0000128605" description="Large ribosomal subunit protein uL14m">
    <location>
        <begin position="1"/>
        <end position="116" status="greater than"/>
    </location>
</feature>
<feature type="non-terminal residue">
    <location>
        <position position="116"/>
    </location>
</feature>
<organism>
    <name type="scientific">Acanthamoeba polyphaga</name>
    <name type="common">Amoeba</name>
    <dbReference type="NCBI Taxonomy" id="5757"/>
    <lineage>
        <taxon>Eukaryota</taxon>
        <taxon>Amoebozoa</taxon>
        <taxon>Discosea</taxon>
        <taxon>Longamoebia</taxon>
        <taxon>Centramoebida</taxon>
        <taxon>Acanthamoebidae</taxon>
        <taxon>Acanthamoeba</taxon>
    </lineage>
</organism>
<proteinExistence type="inferred from homology"/>
<keyword id="KW-0496">Mitochondrion</keyword>
<keyword id="KW-0687">Ribonucleoprotein</keyword>
<keyword id="KW-0689">Ribosomal protein</keyword>
<evidence type="ECO:0000305" key="1"/>
<protein>
    <recommendedName>
        <fullName evidence="1">Large ribosomal subunit protein uL14m</fullName>
    </recommendedName>
    <alternativeName>
        <fullName>60S ribosomal protein L14, mitochondrial</fullName>
    </alternativeName>
</protein>
<geneLocation type="mitochondrion"/>
<comment type="subcellular location">
    <subcellularLocation>
        <location>Mitochondrion</location>
    </subcellularLocation>
</comment>
<comment type="similarity">
    <text evidence="1">Belongs to the universal ribosomal protein uL14 family.</text>
</comment>
<gene>
    <name type="primary">RPL14</name>
</gene>
<sequence>MINVQTVLKVADNSGAVFVSCIRLLNSSSRVGAGVGDTITVVVKKNIIKKNIKKSKEVKKGQVCSAIILRTIKGVKRWGNFFLRSSSNSVALINKYYLPIGSRLLGPVFREIRTNL</sequence>
<accession>P34829</accession>
<name>RM14_ACAPO</name>
<reference key="1">
    <citation type="journal article" date="1993" name="Gene">
        <title>A ribosomal protein in Acanthamoeba polyphaga is conserved in eukaryotic nuclei, organelles and bacteria.</title>
        <authorList>
            <person name="Vodkin M.H."/>
            <person name="Gordon V.R."/>
            <person name="McLaughlin G.L."/>
        </authorList>
    </citation>
    <scope>NUCLEOTIDE SEQUENCE [GENOMIC DNA]</scope>
</reference>